<keyword id="KW-0997">Cell inner membrane</keyword>
<keyword id="KW-1003">Cell membrane</keyword>
<keyword id="KW-0285">Flavoprotein</keyword>
<keyword id="KW-0288">FMN</keyword>
<keyword id="KW-0472">Membrane</keyword>
<keyword id="KW-0560">Oxidoreductase</keyword>
<sequence>MIISAASDYRAAAEARLPPFLFHYMDGGAYAEHTLRRNVSDLADIALRQRVLRNMSDLSLSTELFGETLAMPVALAPVGLTGMYARRGEVQAARAAAARGIPFTLSTVSVCPIEEVAPAIDRPMWFQLYVLKDRGFMRNALERAKAAGVTTLVFTVDMPTPGARYRDAHSGMSGPNAPLRRMLQAMTHPRWAWDVGLLGKPHDLGNISTYRGSPTGLQDYIGWLAANFDPSISWKDLEWIREFWTGPMVIKGILDPEDARDAVRFGADGIVVSNHGGRQLDGVLSSARALPAIADAVKGELKILADSGIRSGLDVVRMLALGADAVLLGRAFVYALAAGGQAGVENLLTLIEREMRVAMILTGTHSVAEISGDALSRVTREAAVVP</sequence>
<comment type="function">
    <text evidence="1">Catalyzes the conversion of L-lactate to pyruvate. Is coupled to the respiratory chain.</text>
</comment>
<comment type="catalytic activity">
    <reaction evidence="1">
        <text>(S)-lactate + A = pyruvate + AH2</text>
        <dbReference type="Rhea" id="RHEA:45816"/>
        <dbReference type="ChEBI" id="CHEBI:13193"/>
        <dbReference type="ChEBI" id="CHEBI:15361"/>
        <dbReference type="ChEBI" id="CHEBI:16651"/>
        <dbReference type="ChEBI" id="CHEBI:17499"/>
    </reaction>
</comment>
<comment type="cofactor">
    <cofactor evidence="1">
        <name>FMN</name>
        <dbReference type="ChEBI" id="CHEBI:58210"/>
    </cofactor>
</comment>
<comment type="subcellular location">
    <subcellularLocation>
        <location evidence="1">Cell inner membrane</location>
        <topology evidence="1">Peripheral membrane protein</topology>
    </subcellularLocation>
</comment>
<comment type="similarity">
    <text evidence="1">Belongs to the FMN-dependent alpha-hydroxy acid dehydrogenase family.</text>
</comment>
<reference key="1">
    <citation type="journal article" date="2008" name="J. Biotechnol.">
        <title>The genome of Xanthomonas campestris pv. campestris B100 and its use for the reconstruction of metabolic pathways involved in xanthan biosynthesis.</title>
        <authorList>
            <person name="Vorhoelter F.-J."/>
            <person name="Schneiker S."/>
            <person name="Goesmann A."/>
            <person name="Krause L."/>
            <person name="Bekel T."/>
            <person name="Kaiser O."/>
            <person name="Linke B."/>
            <person name="Patschkowski T."/>
            <person name="Rueckert C."/>
            <person name="Schmid J."/>
            <person name="Sidhu V.K."/>
            <person name="Sieber V."/>
            <person name="Tauch A."/>
            <person name="Watt S.A."/>
            <person name="Weisshaar B."/>
            <person name="Becker A."/>
            <person name="Niehaus K."/>
            <person name="Puehler A."/>
        </authorList>
    </citation>
    <scope>NUCLEOTIDE SEQUENCE [LARGE SCALE GENOMIC DNA]</scope>
    <source>
        <strain>B100</strain>
    </source>
</reference>
<organism>
    <name type="scientific">Xanthomonas campestris pv. campestris (strain B100)</name>
    <dbReference type="NCBI Taxonomy" id="509169"/>
    <lineage>
        <taxon>Bacteria</taxon>
        <taxon>Pseudomonadati</taxon>
        <taxon>Pseudomonadota</taxon>
        <taxon>Gammaproteobacteria</taxon>
        <taxon>Lysobacterales</taxon>
        <taxon>Lysobacteraceae</taxon>
        <taxon>Xanthomonas</taxon>
    </lineage>
</organism>
<protein>
    <recommendedName>
        <fullName evidence="1">L-lactate dehydrogenase</fullName>
        <ecNumber evidence="1">1.1.-.-</ecNumber>
    </recommendedName>
</protein>
<gene>
    <name evidence="1" type="primary">lldD</name>
    <name type="ordered locus">xcc-b100_0117</name>
</gene>
<name>LLDD_XANCB</name>
<accession>B0RLM2</accession>
<proteinExistence type="inferred from homology"/>
<dbReference type="EC" id="1.1.-.-" evidence="1"/>
<dbReference type="EMBL" id="AM920689">
    <property type="protein sequence ID" value="CAP49447.1"/>
    <property type="molecule type" value="Genomic_DNA"/>
</dbReference>
<dbReference type="SMR" id="B0RLM2"/>
<dbReference type="KEGG" id="xca:xcc-b100_0117"/>
<dbReference type="HOGENOM" id="CLU_020639_0_0_6"/>
<dbReference type="Proteomes" id="UP000001188">
    <property type="component" value="Chromosome"/>
</dbReference>
<dbReference type="GO" id="GO:0005886">
    <property type="term" value="C:plasma membrane"/>
    <property type="evidence" value="ECO:0007669"/>
    <property type="project" value="UniProtKB-SubCell"/>
</dbReference>
<dbReference type="GO" id="GO:0010181">
    <property type="term" value="F:FMN binding"/>
    <property type="evidence" value="ECO:0007669"/>
    <property type="project" value="InterPro"/>
</dbReference>
<dbReference type="GO" id="GO:0004459">
    <property type="term" value="F:L-lactate dehydrogenase activity"/>
    <property type="evidence" value="ECO:0007669"/>
    <property type="project" value="UniProtKB-UniRule"/>
</dbReference>
<dbReference type="GO" id="GO:0009060">
    <property type="term" value="P:aerobic respiration"/>
    <property type="evidence" value="ECO:0007669"/>
    <property type="project" value="TreeGrafter"/>
</dbReference>
<dbReference type="GO" id="GO:0006089">
    <property type="term" value="P:lactate metabolic process"/>
    <property type="evidence" value="ECO:0007669"/>
    <property type="project" value="UniProtKB-UniRule"/>
</dbReference>
<dbReference type="CDD" id="cd02809">
    <property type="entry name" value="alpha_hydroxyacid_oxid_FMN"/>
    <property type="match status" value="1"/>
</dbReference>
<dbReference type="FunFam" id="3.20.20.70:FF:000029">
    <property type="entry name" value="L-lactate dehydrogenase"/>
    <property type="match status" value="1"/>
</dbReference>
<dbReference type="Gene3D" id="3.20.20.70">
    <property type="entry name" value="Aldolase class I"/>
    <property type="match status" value="1"/>
</dbReference>
<dbReference type="HAMAP" id="MF_01559">
    <property type="entry name" value="L_lact_dehydr"/>
    <property type="match status" value="1"/>
</dbReference>
<dbReference type="InterPro" id="IPR013785">
    <property type="entry name" value="Aldolase_TIM"/>
</dbReference>
<dbReference type="InterPro" id="IPR012133">
    <property type="entry name" value="Alpha-hydoxy_acid_DH_FMN"/>
</dbReference>
<dbReference type="InterPro" id="IPR000262">
    <property type="entry name" value="FMN-dep_DH"/>
</dbReference>
<dbReference type="InterPro" id="IPR037396">
    <property type="entry name" value="FMN_HAD"/>
</dbReference>
<dbReference type="InterPro" id="IPR008259">
    <property type="entry name" value="FMN_hydac_DH_AS"/>
</dbReference>
<dbReference type="InterPro" id="IPR020920">
    <property type="entry name" value="LldD"/>
</dbReference>
<dbReference type="NCBIfam" id="NF033901">
    <property type="entry name" value="L_lactate_LldD"/>
    <property type="match status" value="1"/>
</dbReference>
<dbReference type="NCBIfam" id="NF008398">
    <property type="entry name" value="PRK11197.1"/>
    <property type="match status" value="1"/>
</dbReference>
<dbReference type="PANTHER" id="PTHR10578:SF85">
    <property type="entry name" value="L-LACTATE DEHYDROGENASE"/>
    <property type="match status" value="1"/>
</dbReference>
<dbReference type="PANTHER" id="PTHR10578">
    <property type="entry name" value="S -2-HYDROXY-ACID OXIDASE-RELATED"/>
    <property type="match status" value="1"/>
</dbReference>
<dbReference type="Pfam" id="PF01070">
    <property type="entry name" value="FMN_dh"/>
    <property type="match status" value="1"/>
</dbReference>
<dbReference type="PIRSF" id="PIRSF000138">
    <property type="entry name" value="Al-hdrx_acd_dh"/>
    <property type="match status" value="1"/>
</dbReference>
<dbReference type="SUPFAM" id="SSF51395">
    <property type="entry name" value="FMN-linked oxidoreductases"/>
    <property type="match status" value="1"/>
</dbReference>
<dbReference type="PROSITE" id="PS00557">
    <property type="entry name" value="FMN_HYDROXY_ACID_DH_1"/>
    <property type="match status" value="1"/>
</dbReference>
<dbReference type="PROSITE" id="PS51349">
    <property type="entry name" value="FMN_HYDROXY_ACID_DH_2"/>
    <property type="match status" value="1"/>
</dbReference>
<evidence type="ECO:0000255" key="1">
    <source>
        <dbReference type="HAMAP-Rule" id="MF_01559"/>
    </source>
</evidence>
<feature type="chain" id="PRO_0000383453" description="L-lactate dehydrogenase">
    <location>
        <begin position="1"/>
        <end position="386"/>
    </location>
</feature>
<feature type="domain" description="FMN hydroxy acid dehydrogenase" evidence="1">
    <location>
        <begin position="1"/>
        <end position="380"/>
    </location>
</feature>
<feature type="active site" description="Proton acceptor" evidence="1">
    <location>
        <position position="275"/>
    </location>
</feature>
<feature type="binding site" evidence="1">
    <location>
        <position position="24"/>
    </location>
    <ligand>
        <name>substrate</name>
    </ligand>
</feature>
<feature type="binding site" evidence="1">
    <location>
        <position position="106"/>
    </location>
    <ligand>
        <name>FMN</name>
        <dbReference type="ChEBI" id="CHEBI:58210"/>
    </ligand>
</feature>
<feature type="binding site" evidence="1">
    <location>
        <position position="127"/>
    </location>
    <ligand>
        <name>FMN</name>
        <dbReference type="ChEBI" id="CHEBI:58210"/>
    </ligand>
</feature>
<feature type="binding site" evidence="1">
    <location>
        <position position="129"/>
    </location>
    <ligand>
        <name>substrate</name>
    </ligand>
</feature>
<feature type="binding site" evidence="1">
    <location>
        <position position="155"/>
    </location>
    <ligand>
        <name>FMN</name>
        <dbReference type="ChEBI" id="CHEBI:58210"/>
    </ligand>
</feature>
<feature type="binding site" evidence="1">
    <location>
        <position position="164"/>
    </location>
    <ligand>
        <name>substrate</name>
    </ligand>
</feature>
<feature type="binding site" evidence="1">
    <location>
        <position position="251"/>
    </location>
    <ligand>
        <name>FMN</name>
        <dbReference type="ChEBI" id="CHEBI:58210"/>
    </ligand>
</feature>
<feature type="binding site" evidence="1">
    <location>
        <position position="278"/>
    </location>
    <ligand>
        <name>substrate</name>
    </ligand>
</feature>
<feature type="binding site" evidence="1">
    <location>
        <begin position="306"/>
        <end position="330"/>
    </location>
    <ligand>
        <name>FMN</name>
        <dbReference type="ChEBI" id="CHEBI:58210"/>
    </ligand>
</feature>